<evidence type="ECO:0000255" key="1">
    <source>
        <dbReference type="HAMAP-Rule" id="MF_01390"/>
    </source>
</evidence>
<sequence length="505" mass="61702">MEKLKKNKKKLIWQQRFLYPLLFQNDFYALAYNHSLNKFNLKKIENSNLNKHFSFLTLKRLVKRIRRKRNIEELNKNYNKIFDINYNNYFYSKVIREGLAIILENFFLVQSKKKIVKKFTEWTNYQSIHTVFPFIEDNFLHSNYILNTKIPSLIHPELLIRILRRRIQDASFSHLLRLIFHKNKKLVTLNIFSQREITKLSIFLWHSYIYELEFFLVNQWKTLNYFKSLSYLISLNKTYCITKIQHVIKKPLDIKLQFFYKKKMSFHYVRYENHFIIAIKNSNFLAEKWKFFFYKFWQYYFYYLFKLSRINLKKISKNCFSFLGYVFGIQTKSIIVKSNMIHTLSKINISRKEIYSITPISSLIELLAKENFCDTLGHPISKLAWTTLTDDEIFNRFDQIWRNFFYYYSGCKNKKNLYQVQYILRFSCAKTLACKHKSTIRYVWKKYGSNFFAKSFFFKKQELISLKFFKLYPSIKKIWYLNILQINALAKLLQKKILKTNRLNI</sequence>
<accession>Q6YXN6</accession>
<proteinExistence type="inferred from homology"/>
<reference key="1">
    <citation type="journal article" date="2003" name="Nucleic Acids Res.">
        <title>Complete chloroplast DNA sequence of the moss Physcomitrella patens: evidence for the loss and relocation of rpoA from the chloroplast to the nucleus.</title>
        <authorList>
            <person name="Sugiura C."/>
            <person name="Kobayashi Y."/>
            <person name="Setsuyuki A."/>
            <person name="Sugita C."/>
            <person name="Sugita M."/>
        </authorList>
    </citation>
    <scope>NUCLEOTIDE SEQUENCE [LARGE SCALE GENOMIC DNA]</scope>
    <source>
        <strain>cv. Gransden 2004</strain>
    </source>
</reference>
<protein>
    <recommendedName>
        <fullName evidence="1">Maturase K</fullName>
    </recommendedName>
    <alternativeName>
        <fullName evidence="1">Intron maturase</fullName>
    </alternativeName>
</protein>
<name>MATK_PHYPA</name>
<gene>
    <name evidence="1" type="primary">matK</name>
</gene>
<feature type="chain" id="PRO_0000143593" description="Maturase K">
    <location>
        <begin position="1"/>
        <end position="505"/>
    </location>
</feature>
<keyword id="KW-0150">Chloroplast</keyword>
<keyword id="KW-0507">mRNA processing</keyword>
<keyword id="KW-0934">Plastid</keyword>
<keyword id="KW-1185">Reference proteome</keyword>
<keyword id="KW-0694">RNA-binding</keyword>
<keyword id="KW-0819">tRNA processing</keyword>
<geneLocation type="chloroplast"/>
<dbReference type="EMBL" id="AP005672">
    <property type="protein sequence ID" value="BAC85060.1"/>
    <property type="molecule type" value="Genomic_DNA"/>
</dbReference>
<dbReference type="RefSeq" id="NP_904210.1">
    <property type="nucleotide sequence ID" value="NC_005087.2"/>
</dbReference>
<dbReference type="STRING" id="3218.Q6YXN6"/>
<dbReference type="GeneID" id="2546810"/>
<dbReference type="KEGG" id="ppp:2546810"/>
<dbReference type="InParanoid" id="Q6YXN6"/>
<dbReference type="OrthoDB" id="1886907at2759"/>
<dbReference type="Proteomes" id="UP000006727">
    <property type="component" value="Chloroplast"/>
</dbReference>
<dbReference type="GO" id="GO:0009507">
    <property type="term" value="C:chloroplast"/>
    <property type="evidence" value="ECO:0007669"/>
    <property type="project" value="UniProtKB-SubCell"/>
</dbReference>
<dbReference type="GO" id="GO:0003723">
    <property type="term" value="F:RNA binding"/>
    <property type="evidence" value="ECO:0007669"/>
    <property type="project" value="UniProtKB-KW"/>
</dbReference>
<dbReference type="GO" id="GO:0006397">
    <property type="term" value="P:mRNA processing"/>
    <property type="evidence" value="ECO:0007669"/>
    <property type="project" value="UniProtKB-KW"/>
</dbReference>
<dbReference type="GO" id="GO:0008380">
    <property type="term" value="P:RNA splicing"/>
    <property type="evidence" value="ECO:0007669"/>
    <property type="project" value="UniProtKB-UniRule"/>
</dbReference>
<dbReference type="GO" id="GO:0008033">
    <property type="term" value="P:tRNA processing"/>
    <property type="evidence" value="ECO:0007669"/>
    <property type="project" value="UniProtKB-KW"/>
</dbReference>
<dbReference type="HAMAP" id="MF_01390">
    <property type="entry name" value="MatK"/>
    <property type="match status" value="1"/>
</dbReference>
<dbReference type="InterPro" id="IPR024937">
    <property type="entry name" value="Domain_X"/>
</dbReference>
<dbReference type="InterPro" id="IPR002866">
    <property type="entry name" value="Maturase_MatK"/>
</dbReference>
<dbReference type="InterPro" id="IPR024942">
    <property type="entry name" value="Maturase_MatK_N"/>
</dbReference>
<dbReference type="PANTHER" id="PTHR34811">
    <property type="entry name" value="MATURASE K"/>
    <property type="match status" value="1"/>
</dbReference>
<dbReference type="PANTHER" id="PTHR34811:SF1">
    <property type="entry name" value="MATURASE K"/>
    <property type="match status" value="1"/>
</dbReference>
<dbReference type="Pfam" id="PF01348">
    <property type="entry name" value="Intron_maturas2"/>
    <property type="match status" value="1"/>
</dbReference>
<dbReference type="Pfam" id="PF01824">
    <property type="entry name" value="MatK_N"/>
    <property type="match status" value="1"/>
</dbReference>
<comment type="function">
    <text evidence="1">Usually encoded in the trnK tRNA gene intron. Probably assists in splicing its own and other chloroplast group II introns.</text>
</comment>
<comment type="subcellular location">
    <subcellularLocation>
        <location>Plastid</location>
        <location>Chloroplast</location>
    </subcellularLocation>
</comment>
<comment type="similarity">
    <text evidence="1">Belongs to the intron maturase 2 family. MatK subfamily.</text>
</comment>
<organism>
    <name type="scientific">Physcomitrium patens</name>
    <name type="common">Spreading-leaved earth moss</name>
    <name type="synonym">Physcomitrella patens</name>
    <dbReference type="NCBI Taxonomy" id="3218"/>
    <lineage>
        <taxon>Eukaryota</taxon>
        <taxon>Viridiplantae</taxon>
        <taxon>Streptophyta</taxon>
        <taxon>Embryophyta</taxon>
        <taxon>Bryophyta</taxon>
        <taxon>Bryophytina</taxon>
        <taxon>Bryopsida</taxon>
        <taxon>Funariidae</taxon>
        <taxon>Funariales</taxon>
        <taxon>Funariaceae</taxon>
        <taxon>Physcomitrium</taxon>
    </lineage>
</organism>